<gene>
    <name evidence="1" type="primary">tatA</name>
    <name type="ordered locus">HH_0708</name>
</gene>
<protein>
    <recommendedName>
        <fullName evidence="1">Sec-independent protein translocase protein TatA</fullName>
    </recommendedName>
</protein>
<name>TATA_HELHP</name>
<comment type="function">
    <text evidence="1">Part of the twin-arginine translocation (Tat) system that transports large folded proteins containing a characteristic twin-arginine motif in their signal peptide across membranes. TatA could form the protein-conducting channel of the Tat system.</text>
</comment>
<comment type="subunit">
    <text evidence="1">The Tat system comprises two distinct complexes: a TatABC complex, containing multiple copies of TatA, TatB and TatC subunits, and a separate TatA complex, containing only TatA subunits. Substrates initially bind to the TatABC complex, which probably triggers association of the separate TatA complex to form the active translocon.</text>
</comment>
<comment type="subcellular location">
    <subcellularLocation>
        <location evidence="1">Cell inner membrane</location>
        <topology evidence="1">Single-pass membrane protein</topology>
    </subcellularLocation>
</comment>
<comment type="similarity">
    <text evidence="1">Belongs to the TatA/E family.</text>
</comment>
<feature type="chain" id="PRO_1000058961" description="Sec-independent protein translocase protein TatA">
    <location>
        <begin position="1"/>
        <end position="82"/>
    </location>
</feature>
<feature type="transmembrane region" description="Helical" evidence="1">
    <location>
        <begin position="1"/>
        <end position="21"/>
    </location>
</feature>
<feature type="region of interest" description="Disordered" evidence="2">
    <location>
        <begin position="42"/>
        <end position="82"/>
    </location>
</feature>
<feature type="compositionally biased region" description="Basic and acidic residues" evidence="2">
    <location>
        <begin position="63"/>
        <end position="82"/>
    </location>
</feature>
<accession>Q7VIA0</accession>
<reference key="1">
    <citation type="journal article" date="2003" name="Proc. Natl. Acad. Sci. U.S.A.">
        <title>The complete genome sequence of the carcinogenic bacterium Helicobacter hepaticus.</title>
        <authorList>
            <person name="Suerbaum S."/>
            <person name="Josenhans C."/>
            <person name="Sterzenbach T."/>
            <person name="Drescher B."/>
            <person name="Brandt P."/>
            <person name="Bell M."/>
            <person name="Droege M."/>
            <person name="Fartmann B."/>
            <person name="Fischer H.-P."/>
            <person name="Ge Z."/>
            <person name="Hoerster A."/>
            <person name="Holland R."/>
            <person name="Klein K."/>
            <person name="Koenig J."/>
            <person name="Macko L."/>
            <person name="Mendz G.L."/>
            <person name="Nyakatura G."/>
            <person name="Schauer D.B."/>
            <person name="Shen Z."/>
            <person name="Weber J."/>
            <person name="Frosch M."/>
            <person name="Fox J.G."/>
        </authorList>
    </citation>
    <scope>NUCLEOTIDE SEQUENCE [LARGE SCALE GENOMIC DNA]</scope>
    <source>
        <strain>ATCC 51449 / 3B1</strain>
    </source>
</reference>
<proteinExistence type="inferred from homology"/>
<keyword id="KW-0997">Cell inner membrane</keyword>
<keyword id="KW-1003">Cell membrane</keyword>
<keyword id="KW-0472">Membrane</keyword>
<keyword id="KW-0653">Protein transport</keyword>
<keyword id="KW-1185">Reference proteome</keyword>
<keyword id="KW-0811">Translocation</keyword>
<keyword id="KW-0812">Transmembrane</keyword>
<keyword id="KW-1133">Transmembrane helix</keyword>
<keyword id="KW-0813">Transport</keyword>
<evidence type="ECO:0000255" key="1">
    <source>
        <dbReference type="HAMAP-Rule" id="MF_00236"/>
    </source>
</evidence>
<evidence type="ECO:0000256" key="2">
    <source>
        <dbReference type="SAM" id="MobiDB-lite"/>
    </source>
</evidence>
<organism>
    <name type="scientific">Helicobacter hepaticus (strain ATCC 51449 / 3B1)</name>
    <dbReference type="NCBI Taxonomy" id="235279"/>
    <lineage>
        <taxon>Bacteria</taxon>
        <taxon>Pseudomonadati</taxon>
        <taxon>Campylobacterota</taxon>
        <taxon>Epsilonproteobacteria</taxon>
        <taxon>Campylobacterales</taxon>
        <taxon>Helicobacteraceae</taxon>
        <taxon>Helicobacter</taxon>
    </lineage>
</organism>
<sequence length="82" mass="9131">MHPPSITQLLIILLIIVLLFGAKKIPELAKGLGSGIKNFKKAVKEDEEDNQSEENTKSQIKQSESKNENVSKTHTDSQKQDT</sequence>
<dbReference type="EMBL" id="AE017125">
    <property type="protein sequence ID" value="AAP77305.1"/>
    <property type="molecule type" value="Genomic_DNA"/>
</dbReference>
<dbReference type="RefSeq" id="WP_011115550.1">
    <property type="nucleotide sequence ID" value="NC_004917.1"/>
</dbReference>
<dbReference type="SMR" id="Q7VIA0"/>
<dbReference type="STRING" id="235279.HH_0708"/>
<dbReference type="KEGG" id="hhe:HH_0708"/>
<dbReference type="eggNOG" id="COG1826">
    <property type="taxonomic scope" value="Bacteria"/>
</dbReference>
<dbReference type="HOGENOM" id="CLU_086034_5_4_7"/>
<dbReference type="OrthoDB" id="9813726at2"/>
<dbReference type="Proteomes" id="UP000002495">
    <property type="component" value="Chromosome"/>
</dbReference>
<dbReference type="GO" id="GO:0033281">
    <property type="term" value="C:TAT protein transport complex"/>
    <property type="evidence" value="ECO:0007669"/>
    <property type="project" value="UniProtKB-UniRule"/>
</dbReference>
<dbReference type="GO" id="GO:0008320">
    <property type="term" value="F:protein transmembrane transporter activity"/>
    <property type="evidence" value="ECO:0007669"/>
    <property type="project" value="UniProtKB-UniRule"/>
</dbReference>
<dbReference type="GO" id="GO:0043953">
    <property type="term" value="P:protein transport by the Tat complex"/>
    <property type="evidence" value="ECO:0007669"/>
    <property type="project" value="UniProtKB-UniRule"/>
</dbReference>
<dbReference type="Gene3D" id="1.20.5.3310">
    <property type="match status" value="1"/>
</dbReference>
<dbReference type="HAMAP" id="MF_00236">
    <property type="entry name" value="TatA_E"/>
    <property type="match status" value="1"/>
</dbReference>
<dbReference type="InterPro" id="IPR003369">
    <property type="entry name" value="TatA/B/E"/>
</dbReference>
<dbReference type="InterPro" id="IPR006312">
    <property type="entry name" value="TatA/E"/>
</dbReference>
<dbReference type="NCBIfam" id="TIGR01411">
    <property type="entry name" value="tatAE"/>
    <property type="match status" value="1"/>
</dbReference>
<dbReference type="PANTHER" id="PTHR42982">
    <property type="entry name" value="SEC-INDEPENDENT PROTEIN TRANSLOCASE PROTEIN TATA"/>
    <property type="match status" value="1"/>
</dbReference>
<dbReference type="PANTHER" id="PTHR42982:SF1">
    <property type="entry name" value="SEC-INDEPENDENT PROTEIN TRANSLOCASE PROTEIN TATA"/>
    <property type="match status" value="1"/>
</dbReference>
<dbReference type="Pfam" id="PF02416">
    <property type="entry name" value="TatA_B_E"/>
    <property type="match status" value="1"/>
</dbReference>